<comment type="function">
    <text evidence="1">NAD-dependent lysine deacetylase and desuccinylase that specifically removes acetyl and succinyl groups on target proteins. Modulates the activities of several proteins which are inactive in their acylated form.</text>
</comment>
<comment type="catalytic activity">
    <reaction evidence="1">
        <text>N(6)-acetyl-L-lysyl-[protein] + NAD(+) + H2O = 2''-O-acetyl-ADP-D-ribose + nicotinamide + L-lysyl-[protein]</text>
        <dbReference type="Rhea" id="RHEA:43636"/>
        <dbReference type="Rhea" id="RHEA-COMP:9752"/>
        <dbReference type="Rhea" id="RHEA-COMP:10731"/>
        <dbReference type="ChEBI" id="CHEBI:15377"/>
        <dbReference type="ChEBI" id="CHEBI:17154"/>
        <dbReference type="ChEBI" id="CHEBI:29969"/>
        <dbReference type="ChEBI" id="CHEBI:57540"/>
        <dbReference type="ChEBI" id="CHEBI:61930"/>
        <dbReference type="ChEBI" id="CHEBI:83767"/>
        <dbReference type="EC" id="2.3.1.286"/>
    </reaction>
</comment>
<comment type="catalytic activity">
    <reaction evidence="1">
        <text>N(6)-succinyl-L-lysyl-[protein] + NAD(+) + H2O = 2''-O-succinyl-ADP-D-ribose + nicotinamide + L-lysyl-[protein]</text>
        <dbReference type="Rhea" id="RHEA:47668"/>
        <dbReference type="Rhea" id="RHEA-COMP:9752"/>
        <dbReference type="Rhea" id="RHEA-COMP:11877"/>
        <dbReference type="ChEBI" id="CHEBI:15377"/>
        <dbReference type="ChEBI" id="CHEBI:17154"/>
        <dbReference type="ChEBI" id="CHEBI:29969"/>
        <dbReference type="ChEBI" id="CHEBI:57540"/>
        <dbReference type="ChEBI" id="CHEBI:87830"/>
        <dbReference type="ChEBI" id="CHEBI:87832"/>
    </reaction>
</comment>
<comment type="cofactor">
    <cofactor evidence="1">
        <name>Zn(2+)</name>
        <dbReference type="ChEBI" id="CHEBI:29105"/>
    </cofactor>
    <text evidence="1">Binds 1 zinc ion per subunit.</text>
</comment>
<comment type="subcellular location">
    <subcellularLocation>
        <location evidence="1">Cytoplasm</location>
    </subcellularLocation>
</comment>
<comment type="domain">
    <text evidence="1">2 residues (Tyr-66 and Arg-69) present in a large hydrophobic pocket are probably involved in substrate specificity. They are important for desuccinylation activity, but dispensable for deacetylation activity.</text>
</comment>
<comment type="similarity">
    <text evidence="1">Belongs to the sirtuin family. Class III subfamily.</text>
</comment>
<proteinExistence type="inferred from homology"/>
<feature type="chain" id="PRO_0000110363" description="NAD-dependent protein deacylase">
    <location>
        <begin position="1"/>
        <end position="254"/>
    </location>
</feature>
<feature type="domain" description="Deacetylase sirtuin-type" evidence="2">
    <location>
        <begin position="1"/>
        <end position="250"/>
    </location>
</feature>
<feature type="active site" description="Proton acceptor" evidence="2">
    <location>
        <position position="122"/>
    </location>
</feature>
<feature type="binding site" evidence="1">
    <location>
        <begin position="22"/>
        <end position="41"/>
    </location>
    <ligand>
        <name>NAD(+)</name>
        <dbReference type="ChEBI" id="CHEBI:57540"/>
    </ligand>
</feature>
<feature type="binding site" evidence="1">
    <location>
        <position position="66"/>
    </location>
    <ligand>
        <name>substrate</name>
    </ligand>
</feature>
<feature type="binding site" evidence="1">
    <location>
        <position position="69"/>
    </location>
    <ligand>
        <name>substrate</name>
    </ligand>
</feature>
<feature type="binding site" evidence="1">
    <location>
        <begin position="104"/>
        <end position="107"/>
    </location>
    <ligand>
        <name>NAD(+)</name>
        <dbReference type="ChEBI" id="CHEBI:57540"/>
    </ligand>
</feature>
<feature type="binding site" evidence="1">
    <location>
        <position position="130"/>
    </location>
    <ligand>
        <name>Zn(2+)</name>
        <dbReference type="ChEBI" id="CHEBI:29105"/>
    </ligand>
</feature>
<feature type="binding site" evidence="1">
    <location>
        <position position="133"/>
    </location>
    <ligand>
        <name>Zn(2+)</name>
        <dbReference type="ChEBI" id="CHEBI:29105"/>
    </ligand>
</feature>
<feature type="binding site" evidence="1">
    <location>
        <position position="149"/>
    </location>
    <ligand>
        <name>Zn(2+)</name>
        <dbReference type="ChEBI" id="CHEBI:29105"/>
    </ligand>
</feature>
<feature type="binding site" evidence="1">
    <location>
        <position position="152"/>
    </location>
    <ligand>
        <name>Zn(2+)</name>
        <dbReference type="ChEBI" id="CHEBI:29105"/>
    </ligand>
</feature>
<feature type="binding site" evidence="1">
    <location>
        <begin position="189"/>
        <end position="191"/>
    </location>
    <ligand>
        <name>NAD(+)</name>
        <dbReference type="ChEBI" id="CHEBI:57540"/>
    </ligand>
</feature>
<feature type="binding site" evidence="1">
    <location>
        <begin position="215"/>
        <end position="217"/>
    </location>
    <ligand>
        <name>NAD(+)</name>
        <dbReference type="ChEBI" id="CHEBI:57540"/>
    </ligand>
</feature>
<feature type="binding site" evidence="1">
    <location>
        <position position="233"/>
    </location>
    <ligand>
        <name>NAD(+)</name>
        <dbReference type="ChEBI" id="CHEBI:57540"/>
    </ligand>
</feature>
<reference key="1">
    <citation type="journal article" date="2004" name="Nat. Biotechnol.">
        <title>The genome sequence of the extreme thermophile Thermus thermophilus.</title>
        <authorList>
            <person name="Henne A."/>
            <person name="Brueggemann H."/>
            <person name="Raasch C."/>
            <person name="Wiezer A."/>
            <person name="Hartsch T."/>
            <person name="Liesegang H."/>
            <person name="Johann A."/>
            <person name="Lienard T."/>
            <person name="Gohl O."/>
            <person name="Martinez-Arias R."/>
            <person name="Jacobi C."/>
            <person name="Starkuviene V."/>
            <person name="Schlenczeck S."/>
            <person name="Dencker S."/>
            <person name="Huber R."/>
            <person name="Klenk H.-P."/>
            <person name="Kramer W."/>
            <person name="Merkl R."/>
            <person name="Gottschalk G."/>
            <person name="Fritz H.-J."/>
        </authorList>
    </citation>
    <scope>NUCLEOTIDE SEQUENCE [LARGE SCALE GENOMIC DNA]</scope>
    <source>
        <strain>ATCC BAA-163 / DSM 7039 / HB27</strain>
    </source>
</reference>
<accession>Q72IV5</accession>
<sequence length="254" mass="27848">MERLEEARKRLEEAKRVAVLTGAGISKPSGIPTFRDAEGLWKNFNPLDYATPEAYARDPEKVWAWYAWRIQKVREAKPNPAHYALVELERRILSRGGSFLLVTQNVDGLHARAGSQNLVELHGNLLRARCEACGKRFPLPEAFAPPPFCPACGHRARPDVVWFGELLPEGAWERAERAFAEADFALVVGTSAEVEPAASLGRIAFASGAYLVEVNPEPTPLTPLAHLSLRTGAVEGMALLLPPSPEDQAEGHLS</sequence>
<gene>
    <name evidence="1" type="primary">cobB</name>
    <name type="ordered locus">TT_C1026</name>
</gene>
<name>NPD_THET2</name>
<dbReference type="EC" id="2.3.1.286" evidence="1 2"/>
<dbReference type="EMBL" id="AE017221">
    <property type="protein sequence ID" value="AAS81368.1"/>
    <property type="molecule type" value="Genomic_DNA"/>
</dbReference>
<dbReference type="RefSeq" id="WP_011173445.1">
    <property type="nucleotide sequence ID" value="NC_005835.1"/>
</dbReference>
<dbReference type="SMR" id="Q72IV5"/>
<dbReference type="KEGG" id="tth:TT_C1026"/>
<dbReference type="eggNOG" id="COG0846">
    <property type="taxonomic scope" value="Bacteria"/>
</dbReference>
<dbReference type="HOGENOM" id="CLU_023643_3_1_0"/>
<dbReference type="OrthoDB" id="9800582at2"/>
<dbReference type="Proteomes" id="UP000000592">
    <property type="component" value="Chromosome"/>
</dbReference>
<dbReference type="GO" id="GO:0005737">
    <property type="term" value="C:cytoplasm"/>
    <property type="evidence" value="ECO:0007669"/>
    <property type="project" value="UniProtKB-SubCell"/>
</dbReference>
<dbReference type="GO" id="GO:0017136">
    <property type="term" value="F:histone deacetylase activity, NAD-dependent"/>
    <property type="evidence" value="ECO:0007669"/>
    <property type="project" value="TreeGrafter"/>
</dbReference>
<dbReference type="GO" id="GO:0070403">
    <property type="term" value="F:NAD+ binding"/>
    <property type="evidence" value="ECO:0007669"/>
    <property type="project" value="UniProtKB-UniRule"/>
</dbReference>
<dbReference type="GO" id="GO:0036054">
    <property type="term" value="F:protein-malonyllysine demalonylase activity"/>
    <property type="evidence" value="ECO:0007669"/>
    <property type="project" value="InterPro"/>
</dbReference>
<dbReference type="GO" id="GO:0036055">
    <property type="term" value="F:protein-succinyllysine desuccinylase activity"/>
    <property type="evidence" value="ECO:0007669"/>
    <property type="project" value="UniProtKB-UniRule"/>
</dbReference>
<dbReference type="GO" id="GO:0008270">
    <property type="term" value="F:zinc ion binding"/>
    <property type="evidence" value="ECO:0007669"/>
    <property type="project" value="UniProtKB-UniRule"/>
</dbReference>
<dbReference type="CDD" id="cd01412">
    <property type="entry name" value="SIRT5_Af1_CobB"/>
    <property type="match status" value="1"/>
</dbReference>
<dbReference type="Gene3D" id="3.30.1600.10">
    <property type="entry name" value="SIR2/SIRT2 'Small Domain"/>
    <property type="match status" value="1"/>
</dbReference>
<dbReference type="Gene3D" id="3.40.50.1220">
    <property type="entry name" value="TPP-binding domain"/>
    <property type="match status" value="1"/>
</dbReference>
<dbReference type="HAMAP" id="MF_01121">
    <property type="entry name" value="Sirtuin_ClassIII"/>
    <property type="match status" value="1"/>
</dbReference>
<dbReference type="InterPro" id="IPR029035">
    <property type="entry name" value="DHS-like_NAD/FAD-binding_dom"/>
</dbReference>
<dbReference type="InterPro" id="IPR050134">
    <property type="entry name" value="NAD-dep_sirtuin_deacylases"/>
</dbReference>
<dbReference type="InterPro" id="IPR003000">
    <property type="entry name" value="Sirtuin"/>
</dbReference>
<dbReference type="InterPro" id="IPR026591">
    <property type="entry name" value="Sirtuin_cat_small_dom_sf"/>
</dbReference>
<dbReference type="InterPro" id="IPR027546">
    <property type="entry name" value="Sirtuin_class_III"/>
</dbReference>
<dbReference type="InterPro" id="IPR026590">
    <property type="entry name" value="Ssirtuin_cat_dom"/>
</dbReference>
<dbReference type="NCBIfam" id="NF001753">
    <property type="entry name" value="PRK00481.1-3"/>
    <property type="match status" value="1"/>
</dbReference>
<dbReference type="PANTHER" id="PTHR11085:SF4">
    <property type="entry name" value="NAD-DEPENDENT PROTEIN DEACYLASE"/>
    <property type="match status" value="1"/>
</dbReference>
<dbReference type="PANTHER" id="PTHR11085">
    <property type="entry name" value="NAD-DEPENDENT PROTEIN DEACYLASE SIRTUIN-5, MITOCHONDRIAL-RELATED"/>
    <property type="match status" value="1"/>
</dbReference>
<dbReference type="Pfam" id="PF02146">
    <property type="entry name" value="SIR2"/>
    <property type="match status" value="1"/>
</dbReference>
<dbReference type="SUPFAM" id="SSF52467">
    <property type="entry name" value="DHS-like NAD/FAD-binding domain"/>
    <property type="match status" value="1"/>
</dbReference>
<dbReference type="PROSITE" id="PS50305">
    <property type="entry name" value="SIRTUIN"/>
    <property type="match status" value="1"/>
</dbReference>
<keyword id="KW-0963">Cytoplasm</keyword>
<keyword id="KW-0479">Metal-binding</keyword>
<keyword id="KW-0520">NAD</keyword>
<keyword id="KW-0808">Transferase</keyword>
<keyword id="KW-0862">Zinc</keyword>
<protein>
    <recommendedName>
        <fullName evidence="1">NAD-dependent protein deacylase</fullName>
        <ecNumber evidence="1 2">2.3.1.286</ecNumber>
    </recommendedName>
    <alternativeName>
        <fullName evidence="1">Regulatory protein SIR2 homolog</fullName>
    </alternativeName>
</protein>
<evidence type="ECO:0000255" key="1">
    <source>
        <dbReference type="HAMAP-Rule" id="MF_01121"/>
    </source>
</evidence>
<evidence type="ECO:0000255" key="2">
    <source>
        <dbReference type="PROSITE-ProRule" id="PRU00236"/>
    </source>
</evidence>
<organism>
    <name type="scientific">Thermus thermophilus (strain ATCC BAA-163 / DSM 7039 / HB27)</name>
    <dbReference type="NCBI Taxonomy" id="262724"/>
    <lineage>
        <taxon>Bacteria</taxon>
        <taxon>Thermotogati</taxon>
        <taxon>Deinococcota</taxon>
        <taxon>Deinococci</taxon>
        <taxon>Thermales</taxon>
        <taxon>Thermaceae</taxon>
        <taxon>Thermus</taxon>
    </lineage>
</organism>